<sequence length="327" mass="36759">MEAIKGSDVNVPDAVFAWLLDGRGGVKPLEDNDVIDSQHPCWLHLNYTHPDSARWLASTPLLPNNVRDALAGESSRPRVSRMGEGTLITLRCINGSTDERPDQLVAMRLYMDERFIVSTRQRKVLALDDVVSDLQEGTGPVDCGGWLVDVCDALTDHASEFIEELHDKIIDLEDNLLDQQIPPRGFLALLRKQLIVMRRYMAPQRDVYARLASERLPWMSDDHRRRMQDIADRLGRGLDEIDACIARTGIMADEIAQVMQESLARRTYTMSLMAMVFLPSTFLTGLFGVNLGGIPGGGWRFGFSLFCILLVVLIGGVTLWLHRSKWL</sequence>
<evidence type="ECO:0000255" key="1">
    <source>
        <dbReference type="HAMAP-Rule" id="MF_01565"/>
    </source>
</evidence>
<comment type="function">
    <text evidence="1">Zinc transporter. Acts as a Zn(2+):proton symporter, which likely mediates zinc ion uptake.</text>
</comment>
<comment type="catalytic activity">
    <reaction evidence="1">
        <text>Zn(2+)(out) + H(+)(out) = Zn(2+)(in) + H(+)(in)</text>
        <dbReference type="Rhea" id="RHEA:71195"/>
        <dbReference type="ChEBI" id="CHEBI:15378"/>
        <dbReference type="ChEBI" id="CHEBI:29105"/>
    </reaction>
    <physiologicalReaction direction="left-to-right" evidence="1">
        <dbReference type="Rhea" id="RHEA:71196"/>
    </physiologicalReaction>
</comment>
<comment type="subcellular location">
    <subcellularLocation>
        <location evidence="1">Cell inner membrane</location>
        <topology evidence="1">Multi-pass membrane protein</topology>
    </subcellularLocation>
</comment>
<comment type="similarity">
    <text evidence="1">Belongs to the CorA metal ion transporter (MIT) (TC 1.A.35) family.</text>
</comment>
<accession>A9MXN2</accession>
<protein>
    <recommendedName>
        <fullName evidence="1">Zinc transport protein ZntB</fullName>
    </recommendedName>
</protein>
<proteinExistence type="inferred from homology"/>
<organism>
    <name type="scientific">Salmonella paratyphi B (strain ATCC BAA-1250 / SPB7)</name>
    <dbReference type="NCBI Taxonomy" id="1016998"/>
    <lineage>
        <taxon>Bacteria</taxon>
        <taxon>Pseudomonadati</taxon>
        <taxon>Pseudomonadota</taxon>
        <taxon>Gammaproteobacteria</taxon>
        <taxon>Enterobacterales</taxon>
        <taxon>Enterobacteriaceae</taxon>
        <taxon>Salmonella</taxon>
    </lineage>
</organism>
<gene>
    <name evidence="1" type="primary">zntB</name>
    <name type="ordered locus">SPAB_01608</name>
</gene>
<name>ZNTB_SALPB</name>
<keyword id="KW-0997">Cell inner membrane</keyword>
<keyword id="KW-1003">Cell membrane</keyword>
<keyword id="KW-0406">Ion transport</keyword>
<keyword id="KW-0472">Membrane</keyword>
<keyword id="KW-0812">Transmembrane</keyword>
<keyword id="KW-1133">Transmembrane helix</keyword>
<keyword id="KW-0813">Transport</keyword>
<keyword id="KW-0862">Zinc</keyword>
<feature type="chain" id="PRO_1000087823" description="Zinc transport protein ZntB">
    <location>
        <begin position="1"/>
        <end position="327"/>
    </location>
</feature>
<feature type="topological domain" description="Cytoplasmic" evidence="1">
    <location>
        <begin position="1"/>
        <end position="273"/>
    </location>
</feature>
<feature type="transmembrane region" description="Helical" evidence="1">
    <location>
        <begin position="274"/>
        <end position="294"/>
    </location>
</feature>
<feature type="topological domain" description="Periplasmic" evidence="1">
    <location>
        <begin position="295"/>
        <end position="300"/>
    </location>
</feature>
<feature type="transmembrane region" description="Helical" evidence="1">
    <location>
        <begin position="301"/>
        <end position="321"/>
    </location>
</feature>
<feature type="topological domain" description="Cytoplasmic" evidence="1">
    <location>
        <begin position="322"/>
        <end position="327"/>
    </location>
</feature>
<reference key="1">
    <citation type="submission" date="2007-11" db="EMBL/GenBank/DDBJ databases">
        <authorList>
            <consortium name="The Salmonella enterica serovar Paratyphi B Genome Sequencing Project"/>
            <person name="McClelland M."/>
            <person name="Sanderson E.K."/>
            <person name="Porwollik S."/>
            <person name="Spieth J."/>
            <person name="Clifton W.S."/>
            <person name="Fulton R."/>
            <person name="Cordes M."/>
            <person name="Wollam A."/>
            <person name="Shah N."/>
            <person name="Pepin K."/>
            <person name="Bhonagiri V."/>
            <person name="Nash W."/>
            <person name="Johnson M."/>
            <person name="Thiruvilangam P."/>
            <person name="Wilson R."/>
        </authorList>
    </citation>
    <scope>NUCLEOTIDE SEQUENCE [LARGE SCALE GENOMIC DNA]</scope>
    <source>
        <strain>ATCC BAA-1250 / SPB7</strain>
    </source>
</reference>
<dbReference type="EMBL" id="CP000886">
    <property type="protein sequence ID" value="ABX67005.1"/>
    <property type="molecule type" value="Genomic_DNA"/>
</dbReference>
<dbReference type="RefSeq" id="WP_000387373.1">
    <property type="nucleotide sequence ID" value="NC_010102.1"/>
</dbReference>
<dbReference type="SMR" id="A9MXN2"/>
<dbReference type="KEGG" id="spq:SPAB_01608"/>
<dbReference type="PATRIC" id="fig|1016998.12.peg.1514"/>
<dbReference type="HOGENOM" id="CLU_007127_2_0_6"/>
<dbReference type="BioCyc" id="SENT1016998:SPAB_RS06540-MONOMER"/>
<dbReference type="Proteomes" id="UP000008556">
    <property type="component" value="Chromosome"/>
</dbReference>
<dbReference type="GO" id="GO:0005886">
    <property type="term" value="C:plasma membrane"/>
    <property type="evidence" value="ECO:0007669"/>
    <property type="project" value="UniProtKB-SubCell"/>
</dbReference>
<dbReference type="GO" id="GO:0050897">
    <property type="term" value="F:cobalt ion binding"/>
    <property type="evidence" value="ECO:0007669"/>
    <property type="project" value="TreeGrafter"/>
</dbReference>
<dbReference type="GO" id="GO:0015087">
    <property type="term" value="F:cobalt ion transmembrane transporter activity"/>
    <property type="evidence" value="ECO:0007669"/>
    <property type="project" value="TreeGrafter"/>
</dbReference>
<dbReference type="GO" id="GO:0000287">
    <property type="term" value="F:magnesium ion binding"/>
    <property type="evidence" value="ECO:0007669"/>
    <property type="project" value="TreeGrafter"/>
</dbReference>
<dbReference type="GO" id="GO:0015095">
    <property type="term" value="F:magnesium ion transmembrane transporter activity"/>
    <property type="evidence" value="ECO:0007669"/>
    <property type="project" value="TreeGrafter"/>
</dbReference>
<dbReference type="GO" id="GO:0005385">
    <property type="term" value="F:zinc ion transmembrane transporter activity"/>
    <property type="evidence" value="ECO:0007669"/>
    <property type="project" value="UniProtKB-UniRule"/>
</dbReference>
<dbReference type="CDD" id="cd12833">
    <property type="entry name" value="ZntB-like_1"/>
    <property type="match status" value="1"/>
</dbReference>
<dbReference type="FunFam" id="1.20.58.340:FF:000002">
    <property type="entry name" value="Zinc transport protein ZntB"/>
    <property type="match status" value="1"/>
</dbReference>
<dbReference type="FunFam" id="3.30.460.20:FF:000001">
    <property type="entry name" value="Zinc transport protein ZntB"/>
    <property type="match status" value="1"/>
</dbReference>
<dbReference type="Gene3D" id="3.30.460.20">
    <property type="entry name" value="CorA soluble domain-like"/>
    <property type="match status" value="1"/>
</dbReference>
<dbReference type="Gene3D" id="1.20.58.340">
    <property type="entry name" value="Magnesium transport protein CorA, transmembrane region"/>
    <property type="match status" value="2"/>
</dbReference>
<dbReference type="HAMAP" id="MF_01565">
    <property type="entry name" value="ZntB"/>
    <property type="match status" value="1"/>
</dbReference>
<dbReference type="InterPro" id="IPR045861">
    <property type="entry name" value="CorA_cytoplasmic_dom"/>
</dbReference>
<dbReference type="InterPro" id="IPR045863">
    <property type="entry name" value="CorA_TM1_TM2"/>
</dbReference>
<dbReference type="InterPro" id="IPR002523">
    <property type="entry name" value="MgTranspt_CorA/ZnTranspt_ZntB"/>
</dbReference>
<dbReference type="InterPro" id="IPR023714">
    <property type="entry name" value="Zn_transp_ZntB"/>
</dbReference>
<dbReference type="NCBIfam" id="NF007092">
    <property type="entry name" value="PRK09546.1"/>
    <property type="match status" value="1"/>
</dbReference>
<dbReference type="PANTHER" id="PTHR46494">
    <property type="entry name" value="CORA FAMILY METAL ION TRANSPORTER (EUROFUNG)"/>
    <property type="match status" value="1"/>
</dbReference>
<dbReference type="PANTHER" id="PTHR46494:SF3">
    <property type="entry name" value="ZINC TRANSPORT PROTEIN ZNTB"/>
    <property type="match status" value="1"/>
</dbReference>
<dbReference type="Pfam" id="PF01544">
    <property type="entry name" value="CorA"/>
    <property type="match status" value="1"/>
</dbReference>
<dbReference type="SUPFAM" id="SSF143865">
    <property type="entry name" value="CorA soluble domain-like"/>
    <property type="match status" value="1"/>
</dbReference>
<dbReference type="SUPFAM" id="SSF144083">
    <property type="entry name" value="Magnesium transport protein CorA, transmembrane region"/>
    <property type="match status" value="1"/>
</dbReference>